<accession>A1RNY7</accession>
<reference key="1">
    <citation type="submission" date="2006-12" db="EMBL/GenBank/DDBJ databases">
        <title>Complete sequence of Shewanella sp. W3-18-1.</title>
        <authorList>
            <consortium name="US DOE Joint Genome Institute"/>
            <person name="Copeland A."/>
            <person name="Lucas S."/>
            <person name="Lapidus A."/>
            <person name="Barry K."/>
            <person name="Detter J.C."/>
            <person name="Glavina del Rio T."/>
            <person name="Hammon N."/>
            <person name="Israni S."/>
            <person name="Dalin E."/>
            <person name="Tice H."/>
            <person name="Pitluck S."/>
            <person name="Chain P."/>
            <person name="Malfatti S."/>
            <person name="Shin M."/>
            <person name="Vergez L."/>
            <person name="Schmutz J."/>
            <person name="Larimer F."/>
            <person name="Land M."/>
            <person name="Hauser L."/>
            <person name="Kyrpides N."/>
            <person name="Lykidis A."/>
            <person name="Tiedje J."/>
            <person name="Richardson P."/>
        </authorList>
    </citation>
    <scope>NUCLEOTIDE SEQUENCE [LARGE SCALE GENOMIC DNA]</scope>
    <source>
        <strain>W3-18-1</strain>
    </source>
</reference>
<evidence type="ECO:0000255" key="1">
    <source>
        <dbReference type="HAMAP-Rule" id="MF_01865"/>
    </source>
</evidence>
<evidence type="ECO:0000255" key="2">
    <source>
        <dbReference type="PROSITE-ProRule" id="PRU01266"/>
    </source>
</evidence>
<feature type="chain" id="PRO_0000375008" description="Ribosomal protein uS12 methylthiotransferase RimO">
    <location>
        <begin position="1"/>
        <end position="472"/>
    </location>
</feature>
<feature type="domain" description="MTTase N-terminal" evidence="1">
    <location>
        <begin position="33"/>
        <end position="143"/>
    </location>
</feature>
<feature type="domain" description="Radical SAM core" evidence="2">
    <location>
        <begin position="161"/>
        <end position="398"/>
    </location>
</feature>
<feature type="domain" description="TRAM" evidence="1">
    <location>
        <begin position="401"/>
        <end position="467"/>
    </location>
</feature>
<feature type="binding site" evidence="1">
    <location>
        <position position="42"/>
    </location>
    <ligand>
        <name>[4Fe-4S] cluster</name>
        <dbReference type="ChEBI" id="CHEBI:49883"/>
        <label>1</label>
    </ligand>
</feature>
<feature type="binding site" evidence="1">
    <location>
        <position position="78"/>
    </location>
    <ligand>
        <name>[4Fe-4S] cluster</name>
        <dbReference type="ChEBI" id="CHEBI:49883"/>
        <label>1</label>
    </ligand>
</feature>
<feature type="binding site" evidence="1">
    <location>
        <position position="107"/>
    </location>
    <ligand>
        <name>[4Fe-4S] cluster</name>
        <dbReference type="ChEBI" id="CHEBI:49883"/>
        <label>1</label>
    </ligand>
</feature>
<feature type="binding site" evidence="1">
    <location>
        <position position="175"/>
    </location>
    <ligand>
        <name>[4Fe-4S] cluster</name>
        <dbReference type="ChEBI" id="CHEBI:49883"/>
        <label>2</label>
        <note>4Fe-4S-S-AdoMet</note>
    </ligand>
</feature>
<feature type="binding site" evidence="1">
    <location>
        <position position="179"/>
    </location>
    <ligand>
        <name>[4Fe-4S] cluster</name>
        <dbReference type="ChEBI" id="CHEBI:49883"/>
        <label>2</label>
        <note>4Fe-4S-S-AdoMet</note>
    </ligand>
</feature>
<feature type="binding site" evidence="1">
    <location>
        <position position="182"/>
    </location>
    <ligand>
        <name>[4Fe-4S] cluster</name>
        <dbReference type="ChEBI" id="CHEBI:49883"/>
        <label>2</label>
        <note>4Fe-4S-S-AdoMet</note>
    </ligand>
</feature>
<proteinExistence type="inferred from homology"/>
<name>RIMO_SHESW</name>
<comment type="function">
    <text evidence="1">Catalyzes the methylthiolation of an aspartic acid residue of ribosomal protein uS12.</text>
</comment>
<comment type="catalytic activity">
    <reaction evidence="1">
        <text>L-aspartate(89)-[ribosomal protein uS12]-hydrogen + (sulfur carrier)-SH + AH2 + 2 S-adenosyl-L-methionine = 3-methylsulfanyl-L-aspartate(89)-[ribosomal protein uS12]-hydrogen + (sulfur carrier)-H + 5'-deoxyadenosine + L-methionine + A + S-adenosyl-L-homocysteine + 2 H(+)</text>
        <dbReference type="Rhea" id="RHEA:37087"/>
        <dbReference type="Rhea" id="RHEA-COMP:10460"/>
        <dbReference type="Rhea" id="RHEA-COMP:10461"/>
        <dbReference type="Rhea" id="RHEA-COMP:14737"/>
        <dbReference type="Rhea" id="RHEA-COMP:14739"/>
        <dbReference type="ChEBI" id="CHEBI:13193"/>
        <dbReference type="ChEBI" id="CHEBI:15378"/>
        <dbReference type="ChEBI" id="CHEBI:17319"/>
        <dbReference type="ChEBI" id="CHEBI:17499"/>
        <dbReference type="ChEBI" id="CHEBI:29917"/>
        <dbReference type="ChEBI" id="CHEBI:29961"/>
        <dbReference type="ChEBI" id="CHEBI:57844"/>
        <dbReference type="ChEBI" id="CHEBI:57856"/>
        <dbReference type="ChEBI" id="CHEBI:59789"/>
        <dbReference type="ChEBI" id="CHEBI:64428"/>
        <dbReference type="ChEBI" id="CHEBI:73599"/>
        <dbReference type="EC" id="2.8.4.4"/>
    </reaction>
</comment>
<comment type="cofactor">
    <cofactor evidence="1">
        <name>[4Fe-4S] cluster</name>
        <dbReference type="ChEBI" id="CHEBI:49883"/>
    </cofactor>
    <text evidence="1">Binds 2 [4Fe-4S] clusters. One cluster is coordinated with 3 cysteines and an exchangeable S-adenosyl-L-methionine.</text>
</comment>
<comment type="subcellular location">
    <subcellularLocation>
        <location evidence="1">Cytoplasm</location>
    </subcellularLocation>
</comment>
<comment type="similarity">
    <text evidence="1">Belongs to the methylthiotransferase family. RimO subfamily.</text>
</comment>
<protein>
    <recommendedName>
        <fullName evidence="1">Ribosomal protein uS12 methylthiotransferase RimO</fullName>
        <shortName evidence="1">uS12 MTTase</shortName>
        <shortName evidence="1">uS12 methylthiotransferase</shortName>
        <ecNumber evidence="1">2.8.4.4</ecNumber>
    </recommendedName>
    <alternativeName>
        <fullName evidence="1">Ribosomal protein uS12 (aspartate-C(3))-methylthiotransferase</fullName>
    </alternativeName>
    <alternativeName>
        <fullName evidence="1">Ribosome maturation factor RimO</fullName>
    </alternativeName>
</protein>
<gene>
    <name evidence="1" type="primary">rimO</name>
    <name type="ordered locus">Sputw3181_3573</name>
</gene>
<dbReference type="EC" id="2.8.4.4" evidence="1"/>
<dbReference type="EMBL" id="CP000503">
    <property type="protein sequence ID" value="ABM26382.1"/>
    <property type="molecule type" value="Genomic_DNA"/>
</dbReference>
<dbReference type="RefSeq" id="WP_011790813.1">
    <property type="nucleotide sequence ID" value="NC_008750.1"/>
</dbReference>
<dbReference type="SMR" id="A1RNY7"/>
<dbReference type="KEGG" id="shw:Sputw3181_3573"/>
<dbReference type="HOGENOM" id="CLU_018697_0_0_6"/>
<dbReference type="Proteomes" id="UP000002597">
    <property type="component" value="Chromosome"/>
</dbReference>
<dbReference type="GO" id="GO:0005829">
    <property type="term" value="C:cytosol"/>
    <property type="evidence" value="ECO:0007669"/>
    <property type="project" value="TreeGrafter"/>
</dbReference>
<dbReference type="GO" id="GO:0051539">
    <property type="term" value="F:4 iron, 4 sulfur cluster binding"/>
    <property type="evidence" value="ECO:0007669"/>
    <property type="project" value="UniProtKB-UniRule"/>
</dbReference>
<dbReference type="GO" id="GO:0035599">
    <property type="term" value="F:aspartic acid methylthiotransferase activity"/>
    <property type="evidence" value="ECO:0007669"/>
    <property type="project" value="TreeGrafter"/>
</dbReference>
<dbReference type="GO" id="GO:0046872">
    <property type="term" value="F:metal ion binding"/>
    <property type="evidence" value="ECO:0007669"/>
    <property type="project" value="UniProtKB-KW"/>
</dbReference>
<dbReference type="GO" id="GO:0103039">
    <property type="term" value="F:protein methylthiotransferase activity"/>
    <property type="evidence" value="ECO:0007669"/>
    <property type="project" value="UniProtKB-EC"/>
</dbReference>
<dbReference type="GO" id="GO:0006400">
    <property type="term" value="P:tRNA modification"/>
    <property type="evidence" value="ECO:0007669"/>
    <property type="project" value="InterPro"/>
</dbReference>
<dbReference type="CDD" id="cd01335">
    <property type="entry name" value="Radical_SAM"/>
    <property type="match status" value="1"/>
</dbReference>
<dbReference type="FunFam" id="2.40.50.140:FF:000060">
    <property type="entry name" value="Ribosomal protein S12 methylthiotransferase RimO"/>
    <property type="match status" value="1"/>
</dbReference>
<dbReference type="FunFam" id="3.40.50.12160:FF:000002">
    <property type="entry name" value="Ribosomal protein S12 methylthiotransferase RimO"/>
    <property type="match status" value="1"/>
</dbReference>
<dbReference type="FunFam" id="3.80.30.20:FF:000001">
    <property type="entry name" value="tRNA-2-methylthio-N(6)-dimethylallyladenosine synthase 2"/>
    <property type="match status" value="1"/>
</dbReference>
<dbReference type="Gene3D" id="3.40.50.12160">
    <property type="entry name" value="Methylthiotransferase, N-terminal domain"/>
    <property type="match status" value="1"/>
</dbReference>
<dbReference type="Gene3D" id="2.40.50.140">
    <property type="entry name" value="Nucleic acid-binding proteins"/>
    <property type="match status" value="1"/>
</dbReference>
<dbReference type="Gene3D" id="3.80.30.20">
    <property type="entry name" value="tm_1862 like domain"/>
    <property type="match status" value="1"/>
</dbReference>
<dbReference type="HAMAP" id="MF_01865">
    <property type="entry name" value="MTTase_RimO"/>
    <property type="match status" value="1"/>
</dbReference>
<dbReference type="InterPro" id="IPR006638">
    <property type="entry name" value="Elp3/MiaA/NifB-like_rSAM"/>
</dbReference>
<dbReference type="InterPro" id="IPR005839">
    <property type="entry name" value="Methylthiotransferase"/>
</dbReference>
<dbReference type="InterPro" id="IPR020612">
    <property type="entry name" value="Methylthiotransferase_CS"/>
</dbReference>
<dbReference type="InterPro" id="IPR013848">
    <property type="entry name" value="Methylthiotransferase_N"/>
</dbReference>
<dbReference type="InterPro" id="IPR038135">
    <property type="entry name" value="Methylthiotransferase_N_sf"/>
</dbReference>
<dbReference type="InterPro" id="IPR012340">
    <property type="entry name" value="NA-bd_OB-fold"/>
</dbReference>
<dbReference type="InterPro" id="IPR005840">
    <property type="entry name" value="Ribosomal_uS12_MeSTrfase_RimO"/>
</dbReference>
<dbReference type="InterPro" id="IPR007197">
    <property type="entry name" value="rSAM"/>
</dbReference>
<dbReference type="InterPro" id="IPR023404">
    <property type="entry name" value="rSAM_horseshoe"/>
</dbReference>
<dbReference type="InterPro" id="IPR002792">
    <property type="entry name" value="TRAM_dom"/>
</dbReference>
<dbReference type="NCBIfam" id="TIGR01125">
    <property type="entry name" value="30S ribosomal protein S12 methylthiotransferase RimO"/>
    <property type="match status" value="1"/>
</dbReference>
<dbReference type="NCBIfam" id="TIGR00089">
    <property type="entry name" value="MiaB/RimO family radical SAM methylthiotransferase"/>
    <property type="match status" value="1"/>
</dbReference>
<dbReference type="PANTHER" id="PTHR43837">
    <property type="entry name" value="RIBOSOMAL PROTEIN S12 METHYLTHIOTRANSFERASE RIMO"/>
    <property type="match status" value="1"/>
</dbReference>
<dbReference type="PANTHER" id="PTHR43837:SF1">
    <property type="entry name" value="RIBOSOMAL PROTEIN US12 METHYLTHIOTRANSFERASE RIMO"/>
    <property type="match status" value="1"/>
</dbReference>
<dbReference type="Pfam" id="PF04055">
    <property type="entry name" value="Radical_SAM"/>
    <property type="match status" value="1"/>
</dbReference>
<dbReference type="Pfam" id="PF18693">
    <property type="entry name" value="TRAM_2"/>
    <property type="match status" value="1"/>
</dbReference>
<dbReference type="Pfam" id="PF00919">
    <property type="entry name" value="UPF0004"/>
    <property type="match status" value="1"/>
</dbReference>
<dbReference type="SFLD" id="SFLDG01082">
    <property type="entry name" value="B12-binding_domain_containing"/>
    <property type="match status" value="1"/>
</dbReference>
<dbReference type="SFLD" id="SFLDS00029">
    <property type="entry name" value="Radical_SAM"/>
    <property type="match status" value="1"/>
</dbReference>
<dbReference type="SFLD" id="SFLDF00274">
    <property type="entry name" value="ribosomal_protein_S12_methylth"/>
    <property type="match status" value="1"/>
</dbReference>
<dbReference type="SMART" id="SM00729">
    <property type="entry name" value="Elp3"/>
    <property type="match status" value="1"/>
</dbReference>
<dbReference type="SUPFAM" id="SSF102114">
    <property type="entry name" value="Radical SAM enzymes"/>
    <property type="match status" value="1"/>
</dbReference>
<dbReference type="PROSITE" id="PS51449">
    <property type="entry name" value="MTTASE_N"/>
    <property type="match status" value="1"/>
</dbReference>
<dbReference type="PROSITE" id="PS01278">
    <property type="entry name" value="MTTASE_RADICAL"/>
    <property type="match status" value="1"/>
</dbReference>
<dbReference type="PROSITE" id="PS51918">
    <property type="entry name" value="RADICAL_SAM"/>
    <property type="match status" value="1"/>
</dbReference>
<dbReference type="PROSITE" id="PS50926">
    <property type="entry name" value="TRAM"/>
    <property type="match status" value="1"/>
</dbReference>
<keyword id="KW-0004">4Fe-4S</keyword>
<keyword id="KW-0963">Cytoplasm</keyword>
<keyword id="KW-0408">Iron</keyword>
<keyword id="KW-0411">Iron-sulfur</keyword>
<keyword id="KW-0479">Metal-binding</keyword>
<keyword id="KW-0949">S-adenosyl-L-methionine</keyword>
<keyword id="KW-0808">Transferase</keyword>
<organism>
    <name type="scientific">Shewanella sp. (strain W3-18-1)</name>
    <dbReference type="NCBI Taxonomy" id="351745"/>
    <lineage>
        <taxon>Bacteria</taxon>
        <taxon>Pseudomonadati</taxon>
        <taxon>Pseudomonadota</taxon>
        <taxon>Gammaproteobacteria</taxon>
        <taxon>Alteromonadales</taxon>
        <taxon>Shewanellaceae</taxon>
        <taxon>Shewanella</taxon>
    </lineage>
</organism>
<sequence length="472" mass="52834">MTVETFKPKQTTTLDTPAKTLEAASTNAVTTGNRIGFVSLGCPKNLVDSERILTQLRIDGYEVTNSYDNADLVIVNTCGFIDAAVEESLDAVREALEENGKVIVTGCLGAKENQIREVHPDVLEITGPHSYEAVLKHVHKYVPKPEHNPFTSLIPQTGVKLTPKHYAYLKISEGCDNRCTFCIIPSLRGDLDSRPAGSILDEAKRLVESGVQEILVVSQDTSAYGKDKGGRTDFWDGMPVKQDITSLARQLGKMGAWVRLHYIYPYPWVDDLIPLMAEGLILPYLDIPMQHASPRILKMMKRPGRVDRQLEAIQRWREICPDLVIRSTFIVGFPGETEEDFQILLDFLKEARLDRVGCFKYSEVDGAVANTIAELISEEVKEDRYHRFMELQAEISAERLARFVGRTLDILIDDVDEEGAIGRSFADAPEIDGMVFINGETELEPGMLVRARITHSDEHDLWAEVVDADTQD</sequence>